<proteinExistence type="evidence at protein level"/>
<protein>
    <recommendedName>
        <fullName>Taste receptor type 1 member 2</fullName>
    </recommendedName>
    <alternativeName>
        <fullName>G-protein coupled receptor 71</fullName>
    </alternativeName>
    <alternativeName>
        <fullName>Sweet taste receptor T1R2</fullName>
    </alternativeName>
</protein>
<name>TS1R2_HUMAN</name>
<organism>
    <name type="scientific">Homo sapiens</name>
    <name type="common">Human</name>
    <dbReference type="NCBI Taxonomy" id="9606"/>
    <lineage>
        <taxon>Eukaryota</taxon>
        <taxon>Metazoa</taxon>
        <taxon>Chordata</taxon>
        <taxon>Craniata</taxon>
        <taxon>Vertebrata</taxon>
        <taxon>Euteleostomi</taxon>
        <taxon>Mammalia</taxon>
        <taxon>Eutheria</taxon>
        <taxon>Euarchontoglires</taxon>
        <taxon>Primates</taxon>
        <taxon>Haplorrhini</taxon>
        <taxon>Catarrhini</taxon>
        <taxon>Hominidae</taxon>
        <taxon>Homo</taxon>
    </lineage>
</organism>
<gene>
    <name type="primary">TAS1R2</name>
    <name type="synonym">GPR71</name>
    <name type="synonym">T1R2</name>
    <name type="synonym">TR2</name>
</gene>
<reference key="1">
    <citation type="journal article" date="2002" name="Proc. Natl. Acad. Sci. U.S.A.">
        <title>Human receptors for sweet and umami taste.</title>
        <authorList>
            <person name="Li X."/>
            <person name="Staszewski L."/>
            <person name="Xu H."/>
            <person name="Durick K."/>
            <person name="Zoller M."/>
            <person name="Adler E."/>
        </authorList>
    </citation>
    <scope>NUCLEOTIDE SEQUENCE [GENOMIC DNA]</scope>
    <scope>VARIANTS CYS-9; VAL-191; GLY-317 AND VAL-486</scope>
</reference>
<reference key="2">
    <citation type="journal article" date="2006" name="Nature">
        <title>The DNA sequence and biological annotation of human chromosome 1.</title>
        <authorList>
            <person name="Gregory S.G."/>
            <person name="Barlow K.F."/>
            <person name="McLay K.E."/>
            <person name="Kaul R."/>
            <person name="Swarbreck D."/>
            <person name="Dunham A."/>
            <person name="Scott C.E."/>
            <person name="Howe K.L."/>
            <person name="Woodfine K."/>
            <person name="Spencer C.C.A."/>
            <person name="Jones M.C."/>
            <person name="Gillson C."/>
            <person name="Searle S."/>
            <person name="Zhou Y."/>
            <person name="Kokocinski F."/>
            <person name="McDonald L."/>
            <person name="Evans R."/>
            <person name="Phillips K."/>
            <person name="Atkinson A."/>
            <person name="Cooper R."/>
            <person name="Jones C."/>
            <person name="Hall R.E."/>
            <person name="Andrews T.D."/>
            <person name="Lloyd C."/>
            <person name="Ainscough R."/>
            <person name="Almeida J.P."/>
            <person name="Ambrose K.D."/>
            <person name="Anderson F."/>
            <person name="Andrew R.W."/>
            <person name="Ashwell R.I.S."/>
            <person name="Aubin K."/>
            <person name="Babbage A.K."/>
            <person name="Bagguley C.L."/>
            <person name="Bailey J."/>
            <person name="Beasley H."/>
            <person name="Bethel G."/>
            <person name="Bird C.P."/>
            <person name="Bray-Allen S."/>
            <person name="Brown J.Y."/>
            <person name="Brown A.J."/>
            <person name="Buckley D."/>
            <person name="Burton J."/>
            <person name="Bye J."/>
            <person name="Carder C."/>
            <person name="Chapman J.C."/>
            <person name="Clark S.Y."/>
            <person name="Clarke G."/>
            <person name="Clee C."/>
            <person name="Cobley V."/>
            <person name="Collier R.E."/>
            <person name="Corby N."/>
            <person name="Coville G.J."/>
            <person name="Davies J."/>
            <person name="Deadman R."/>
            <person name="Dunn M."/>
            <person name="Earthrowl M."/>
            <person name="Ellington A.G."/>
            <person name="Errington H."/>
            <person name="Frankish A."/>
            <person name="Frankland J."/>
            <person name="French L."/>
            <person name="Garner P."/>
            <person name="Garnett J."/>
            <person name="Gay L."/>
            <person name="Ghori M.R.J."/>
            <person name="Gibson R."/>
            <person name="Gilby L.M."/>
            <person name="Gillett W."/>
            <person name="Glithero R.J."/>
            <person name="Grafham D.V."/>
            <person name="Griffiths C."/>
            <person name="Griffiths-Jones S."/>
            <person name="Grocock R."/>
            <person name="Hammond S."/>
            <person name="Harrison E.S.I."/>
            <person name="Hart E."/>
            <person name="Haugen E."/>
            <person name="Heath P.D."/>
            <person name="Holmes S."/>
            <person name="Holt K."/>
            <person name="Howden P.J."/>
            <person name="Hunt A.R."/>
            <person name="Hunt S.E."/>
            <person name="Hunter G."/>
            <person name="Isherwood J."/>
            <person name="James R."/>
            <person name="Johnson C."/>
            <person name="Johnson D."/>
            <person name="Joy A."/>
            <person name="Kay M."/>
            <person name="Kershaw J.K."/>
            <person name="Kibukawa M."/>
            <person name="Kimberley A.M."/>
            <person name="King A."/>
            <person name="Knights A.J."/>
            <person name="Lad H."/>
            <person name="Laird G."/>
            <person name="Lawlor S."/>
            <person name="Leongamornlert D.A."/>
            <person name="Lloyd D.M."/>
            <person name="Loveland J."/>
            <person name="Lovell J."/>
            <person name="Lush M.J."/>
            <person name="Lyne R."/>
            <person name="Martin S."/>
            <person name="Mashreghi-Mohammadi M."/>
            <person name="Matthews L."/>
            <person name="Matthews N.S.W."/>
            <person name="McLaren S."/>
            <person name="Milne S."/>
            <person name="Mistry S."/>
            <person name="Moore M.J.F."/>
            <person name="Nickerson T."/>
            <person name="O'Dell C.N."/>
            <person name="Oliver K."/>
            <person name="Palmeiri A."/>
            <person name="Palmer S.A."/>
            <person name="Parker A."/>
            <person name="Patel D."/>
            <person name="Pearce A.V."/>
            <person name="Peck A.I."/>
            <person name="Pelan S."/>
            <person name="Phelps K."/>
            <person name="Phillimore B.J."/>
            <person name="Plumb R."/>
            <person name="Rajan J."/>
            <person name="Raymond C."/>
            <person name="Rouse G."/>
            <person name="Saenphimmachak C."/>
            <person name="Sehra H.K."/>
            <person name="Sheridan E."/>
            <person name="Shownkeen R."/>
            <person name="Sims S."/>
            <person name="Skuce C.D."/>
            <person name="Smith M."/>
            <person name="Steward C."/>
            <person name="Subramanian S."/>
            <person name="Sycamore N."/>
            <person name="Tracey A."/>
            <person name="Tromans A."/>
            <person name="Van Helmond Z."/>
            <person name="Wall M."/>
            <person name="Wallis J.M."/>
            <person name="White S."/>
            <person name="Whitehead S.L."/>
            <person name="Wilkinson J.E."/>
            <person name="Willey D.L."/>
            <person name="Williams H."/>
            <person name="Wilming L."/>
            <person name="Wray P.W."/>
            <person name="Wu Z."/>
            <person name="Coulson A."/>
            <person name="Vaudin M."/>
            <person name="Sulston J.E."/>
            <person name="Durbin R.M."/>
            <person name="Hubbard T."/>
            <person name="Wooster R."/>
            <person name="Dunham I."/>
            <person name="Carter N.P."/>
            <person name="McVean G."/>
            <person name="Ross M.T."/>
            <person name="Harrow J."/>
            <person name="Olson M.V."/>
            <person name="Beck S."/>
            <person name="Rogers J."/>
            <person name="Bentley D.R."/>
        </authorList>
    </citation>
    <scope>NUCLEOTIDE SEQUENCE [LARGE SCALE GENOMIC DNA]</scope>
</reference>
<dbReference type="EMBL" id="AF458154">
    <property type="protein sequence ID" value="AAM12239.1"/>
    <property type="molecule type" value="Genomic_DNA"/>
</dbReference>
<dbReference type="EMBL" id="AF458149">
    <property type="protein sequence ID" value="AAM12239.1"/>
    <property type="status" value="JOINED"/>
    <property type="molecule type" value="Genomic_DNA"/>
</dbReference>
<dbReference type="EMBL" id="AF458150">
    <property type="protein sequence ID" value="AAM12239.1"/>
    <property type="status" value="JOINED"/>
    <property type="molecule type" value="Genomic_DNA"/>
</dbReference>
<dbReference type="EMBL" id="AF458152">
    <property type="protein sequence ID" value="AAM12239.1"/>
    <property type="status" value="JOINED"/>
    <property type="molecule type" value="Genomic_DNA"/>
</dbReference>
<dbReference type="EMBL" id="AF458153">
    <property type="protein sequence ID" value="AAM12239.1"/>
    <property type="status" value="JOINED"/>
    <property type="molecule type" value="Genomic_DNA"/>
</dbReference>
<dbReference type="EMBL" id="AF458151">
    <property type="protein sequence ID" value="AAM12239.1"/>
    <property type="status" value="JOINED"/>
    <property type="molecule type" value="Genomic_DNA"/>
</dbReference>
<dbReference type="EMBL" id="BX537160">
    <property type="status" value="NOT_ANNOTATED_CDS"/>
    <property type="molecule type" value="Genomic_DNA"/>
</dbReference>
<dbReference type="EMBL" id="AL831755">
    <property type="status" value="NOT_ANNOTATED_CDS"/>
    <property type="molecule type" value="Genomic_DNA"/>
</dbReference>
<dbReference type="EMBL" id="BK000151">
    <property type="protein sequence ID" value="DAA00019.1"/>
    <property type="molecule type" value="Genomic_DNA"/>
</dbReference>
<dbReference type="CCDS" id="CCDS187.1"/>
<dbReference type="RefSeq" id="NP_689418.2">
    <property type="nucleotide sequence ID" value="NM_152232.6"/>
</dbReference>
<dbReference type="SMR" id="Q8TE23"/>
<dbReference type="BioGRID" id="123327">
    <property type="interactions" value="40"/>
</dbReference>
<dbReference type="FunCoup" id="Q8TE23">
    <property type="interactions" value="130"/>
</dbReference>
<dbReference type="IntAct" id="Q8TE23">
    <property type="interactions" value="25"/>
</dbReference>
<dbReference type="STRING" id="9606.ENSP00000364520"/>
<dbReference type="BindingDB" id="Q8TE23"/>
<dbReference type="ChEMBL" id="CHEMBL1613741"/>
<dbReference type="DrugBank" id="DB00168">
    <property type="generic name" value="Aspartame"/>
</dbReference>
<dbReference type="DrugBank" id="DB02772">
    <property type="generic name" value="Sucrose"/>
</dbReference>
<dbReference type="TCDB" id="9.A.14.7.4">
    <property type="family name" value="the g-protein-coupled receptor (gpcr) family"/>
</dbReference>
<dbReference type="GlyCosmos" id="Q8TE23">
    <property type="glycosylation" value="8 sites, No reported glycans"/>
</dbReference>
<dbReference type="GlyGen" id="Q8TE23">
    <property type="glycosylation" value="8 sites"/>
</dbReference>
<dbReference type="iPTMnet" id="Q8TE23"/>
<dbReference type="PhosphoSitePlus" id="Q8TE23"/>
<dbReference type="BioMuta" id="TAS1R2"/>
<dbReference type="DMDM" id="116242831"/>
<dbReference type="MassIVE" id="Q8TE23"/>
<dbReference type="PaxDb" id="9606-ENSP00000364520"/>
<dbReference type="PeptideAtlas" id="Q8TE23"/>
<dbReference type="ProteomicsDB" id="74391"/>
<dbReference type="Antibodypedia" id="14734">
    <property type="antibodies" value="202 antibodies from 30 providers"/>
</dbReference>
<dbReference type="DNASU" id="80834"/>
<dbReference type="Ensembl" id="ENST00000375371.4">
    <property type="protein sequence ID" value="ENSP00000364520.3"/>
    <property type="gene ID" value="ENSG00000179002.6"/>
</dbReference>
<dbReference type="GeneID" id="80834"/>
<dbReference type="KEGG" id="hsa:80834"/>
<dbReference type="MANE-Select" id="ENST00000375371.4">
    <property type="protein sequence ID" value="ENSP00000364520.3"/>
    <property type="RefSeq nucleotide sequence ID" value="NM_152232.6"/>
    <property type="RefSeq protein sequence ID" value="NP_689418.2"/>
</dbReference>
<dbReference type="UCSC" id="uc001bba.2">
    <property type="organism name" value="human"/>
</dbReference>
<dbReference type="AGR" id="HGNC:14905"/>
<dbReference type="CTD" id="80834"/>
<dbReference type="DisGeNET" id="80834"/>
<dbReference type="GeneCards" id="TAS1R2"/>
<dbReference type="HGNC" id="HGNC:14905">
    <property type="gene designation" value="TAS1R2"/>
</dbReference>
<dbReference type="HPA" id="ENSG00000179002">
    <property type="expression patterns" value="Not detected"/>
</dbReference>
<dbReference type="MIM" id="606226">
    <property type="type" value="gene"/>
</dbReference>
<dbReference type="neXtProt" id="NX_Q8TE23"/>
<dbReference type="OpenTargets" id="ENSG00000179002"/>
<dbReference type="PharmGKB" id="PA37919"/>
<dbReference type="VEuPathDB" id="HostDB:ENSG00000179002"/>
<dbReference type="eggNOG" id="KOG1056">
    <property type="taxonomic scope" value="Eukaryota"/>
</dbReference>
<dbReference type="GeneTree" id="ENSGT00940000156136"/>
<dbReference type="HOGENOM" id="CLU_005389_5_1_1"/>
<dbReference type="InParanoid" id="Q8TE23"/>
<dbReference type="OMA" id="STCLCRQ"/>
<dbReference type="OrthoDB" id="5984008at2759"/>
<dbReference type="PAN-GO" id="Q8TE23">
    <property type="GO annotations" value="5 GO annotations based on evolutionary models"/>
</dbReference>
<dbReference type="PhylomeDB" id="Q8TE23"/>
<dbReference type="TreeFam" id="TF331269"/>
<dbReference type="PathwayCommons" id="Q8TE23"/>
<dbReference type="Reactome" id="R-HSA-418594">
    <property type="pathway name" value="G alpha (i) signalling events"/>
</dbReference>
<dbReference type="Reactome" id="R-HSA-420499">
    <property type="pathway name" value="Class C/3 (Metabotropic glutamate/pheromone receptors)"/>
</dbReference>
<dbReference type="Reactome" id="R-HSA-9717207">
    <property type="pathway name" value="Sensory perception of sweet, bitter, and umami (glutamate) taste"/>
</dbReference>
<dbReference type="BioGRID-ORCS" id="80834">
    <property type="hits" value="6 hits in 1142 CRISPR screens"/>
</dbReference>
<dbReference type="GeneWiki" id="TAS1R2"/>
<dbReference type="GenomeRNAi" id="80834"/>
<dbReference type="Pharos" id="Q8TE23">
    <property type="development level" value="Tbio"/>
</dbReference>
<dbReference type="PRO" id="PR:Q8TE23"/>
<dbReference type="Proteomes" id="UP000005640">
    <property type="component" value="Chromosome 1"/>
</dbReference>
<dbReference type="RNAct" id="Q8TE23">
    <property type="molecule type" value="protein"/>
</dbReference>
<dbReference type="Bgee" id="ENSG00000179002">
    <property type="expression patterns" value="Expressed in skin of leg and 2 other cell types or tissues"/>
</dbReference>
<dbReference type="GO" id="GO:0016020">
    <property type="term" value="C:membrane"/>
    <property type="evidence" value="ECO:0000305"/>
    <property type="project" value="UniProtKB"/>
</dbReference>
<dbReference type="GO" id="GO:0005886">
    <property type="term" value="C:plasma membrane"/>
    <property type="evidence" value="ECO:0000318"/>
    <property type="project" value="GO_Central"/>
</dbReference>
<dbReference type="GO" id="GO:0043235">
    <property type="term" value="C:receptor complex"/>
    <property type="evidence" value="ECO:0000314"/>
    <property type="project" value="MGI"/>
</dbReference>
<dbReference type="GO" id="GO:1903767">
    <property type="term" value="C:sweet taste receptor complex"/>
    <property type="evidence" value="ECO:0000314"/>
    <property type="project" value="BHF-UCL"/>
</dbReference>
<dbReference type="GO" id="GO:0004930">
    <property type="term" value="F:G protein-coupled receptor activity"/>
    <property type="evidence" value="ECO:0000318"/>
    <property type="project" value="GO_Central"/>
</dbReference>
<dbReference type="GO" id="GO:0033041">
    <property type="term" value="F:sweet taste receptor activity"/>
    <property type="evidence" value="ECO:0007669"/>
    <property type="project" value="Ensembl"/>
</dbReference>
<dbReference type="GO" id="GO:0008527">
    <property type="term" value="F:taste receptor activity"/>
    <property type="evidence" value="ECO:0000353"/>
    <property type="project" value="UniProtKB"/>
</dbReference>
<dbReference type="GO" id="GO:0001582">
    <property type="term" value="P:detection of chemical stimulus involved in sensory perception of sweet taste"/>
    <property type="evidence" value="ECO:0000314"/>
    <property type="project" value="HGNC-UCL"/>
</dbReference>
<dbReference type="GO" id="GO:0007186">
    <property type="term" value="P:G protein-coupled receptor signaling pathway"/>
    <property type="evidence" value="ECO:0000305"/>
    <property type="project" value="HGNC-UCL"/>
</dbReference>
<dbReference type="GO" id="GO:0032467">
    <property type="term" value="P:positive regulation of cytokinesis"/>
    <property type="evidence" value="ECO:0000315"/>
    <property type="project" value="UniProtKB"/>
</dbReference>
<dbReference type="GO" id="GO:0050916">
    <property type="term" value="P:sensory perception of sweet taste"/>
    <property type="evidence" value="ECO:0000314"/>
    <property type="project" value="UniProtKB"/>
</dbReference>
<dbReference type="CDD" id="cd15288">
    <property type="entry name" value="7tmC_TAS1R2"/>
    <property type="match status" value="1"/>
</dbReference>
<dbReference type="CDD" id="cd06363">
    <property type="entry name" value="PBP1_taste_receptor"/>
    <property type="match status" value="1"/>
</dbReference>
<dbReference type="FunFam" id="3.40.50.2300:FF:000016">
    <property type="entry name" value="Taste 1 receptor member 2"/>
    <property type="match status" value="1"/>
</dbReference>
<dbReference type="FunFam" id="2.10.50.30:FF:000004">
    <property type="entry name" value="Taste receptor type 1 member 3-like protein"/>
    <property type="match status" value="1"/>
</dbReference>
<dbReference type="Gene3D" id="3.40.50.2300">
    <property type="match status" value="2"/>
</dbReference>
<dbReference type="Gene3D" id="2.10.50.30">
    <property type="entry name" value="GPCR, family 3, nine cysteines domain"/>
    <property type="match status" value="1"/>
</dbReference>
<dbReference type="InterPro" id="IPR001828">
    <property type="entry name" value="ANF_lig-bd_rcpt"/>
</dbReference>
<dbReference type="InterPro" id="IPR000337">
    <property type="entry name" value="GPCR_3"/>
</dbReference>
<dbReference type="InterPro" id="IPR011500">
    <property type="entry name" value="GPCR_3_9-Cys_dom"/>
</dbReference>
<dbReference type="InterPro" id="IPR038550">
    <property type="entry name" value="GPCR_3_9-Cys_sf"/>
</dbReference>
<dbReference type="InterPro" id="IPR017978">
    <property type="entry name" value="GPCR_3_C"/>
</dbReference>
<dbReference type="InterPro" id="IPR000068">
    <property type="entry name" value="GPCR_3_Ca_sens_rcpt-rel"/>
</dbReference>
<dbReference type="InterPro" id="IPR017979">
    <property type="entry name" value="GPCR_3_CS"/>
</dbReference>
<dbReference type="InterPro" id="IPR028082">
    <property type="entry name" value="Peripla_BP_I"/>
</dbReference>
<dbReference type="PANTHER" id="PTHR24061">
    <property type="entry name" value="CALCIUM-SENSING RECEPTOR-RELATED"/>
    <property type="match status" value="1"/>
</dbReference>
<dbReference type="PANTHER" id="PTHR24061:SF517">
    <property type="entry name" value="TASTE RECEPTOR TYPE 1 MEMBER 2"/>
    <property type="match status" value="1"/>
</dbReference>
<dbReference type="Pfam" id="PF00003">
    <property type="entry name" value="7tm_3"/>
    <property type="match status" value="1"/>
</dbReference>
<dbReference type="Pfam" id="PF01094">
    <property type="entry name" value="ANF_receptor"/>
    <property type="match status" value="1"/>
</dbReference>
<dbReference type="Pfam" id="PF07562">
    <property type="entry name" value="NCD3G"/>
    <property type="match status" value="1"/>
</dbReference>
<dbReference type="PRINTS" id="PR00248">
    <property type="entry name" value="GPCRMGR"/>
</dbReference>
<dbReference type="SUPFAM" id="SSF53822">
    <property type="entry name" value="Periplasmic binding protein-like I"/>
    <property type="match status" value="1"/>
</dbReference>
<dbReference type="PROSITE" id="PS00980">
    <property type="entry name" value="G_PROTEIN_RECEP_F3_2"/>
    <property type="match status" value="1"/>
</dbReference>
<dbReference type="PROSITE" id="PS50259">
    <property type="entry name" value="G_PROTEIN_RECEP_F3_4"/>
    <property type="match status" value="1"/>
</dbReference>
<feature type="signal peptide" evidence="1">
    <location>
        <begin position="1"/>
        <end position="19"/>
    </location>
</feature>
<feature type="chain" id="PRO_0000012957" description="Taste receptor type 1 member 2">
    <location>
        <begin position="20"/>
        <end position="839"/>
    </location>
</feature>
<feature type="topological domain" description="Extracellular" evidence="1">
    <location>
        <begin position="20"/>
        <end position="566"/>
    </location>
</feature>
<feature type="transmembrane region" description="Helical; Name=1" evidence="1">
    <location>
        <begin position="567"/>
        <end position="587"/>
    </location>
</feature>
<feature type="topological domain" description="Cytoplasmic" evidence="1">
    <location>
        <begin position="588"/>
        <end position="602"/>
    </location>
</feature>
<feature type="transmembrane region" description="Helical; Name=2" evidence="1">
    <location>
        <begin position="603"/>
        <end position="623"/>
    </location>
</feature>
<feature type="topological domain" description="Extracellular" evidence="1">
    <location>
        <begin position="624"/>
        <end position="635"/>
    </location>
</feature>
<feature type="transmembrane region" description="Helical; Name=3" evidence="1">
    <location>
        <begin position="636"/>
        <end position="656"/>
    </location>
</feature>
<feature type="topological domain" description="Cytoplasmic" evidence="1">
    <location>
        <begin position="657"/>
        <end position="681"/>
    </location>
</feature>
<feature type="transmembrane region" description="Helical; Name=4" evidence="1">
    <location>
        <begin position="682"/>
        <end position="702"/>
    </location>
</feature>
<feature type="topological domain" description="Extracellular" evidence="1">
    <location>
        <begin position="703"/>
        <end position="727"/>
    </location>
</feature>
<feature type="transmembrane region" description="Helical; Name=5" evidence="1">
    <location>
        <begin position="728"/>
        <end position="748"/>
    </location>
</feature>
<feature type="topological domain" description="Cytoplasmic" evidence="1">
    <location>
        <begin position="749"/>
        <end position="760"/>
    </location>
</feature>
<feature type="transmembrane region" description="Helical; Name=6" evidence="1">
    <location>
        <begin position="761"/>
        <end position="781"/>
    </location>
</feature>
<feature type="topological domain" description="Extracellular" evidence="1">
    <location>
        <begin position="782"/>
        <end position="784"/>
    </location>
</feature>
<feature type="transmembrane region" description="Helical; Name=7" evidence="1">
    <location>
        <begin position="785"/>
        <end position="805"/>
    </location>
</feature>
<feature type="topological domain" description="Cytoplasmic" evidence="1">
    <location>
        <begin position="806"/>
        <end position="839"/>
    </location>
</feature>
<feature type="glycosylation site" description="N-linked (GlcNAc...) asparagine" evidence="1">
    <location>
        <position position="84"/>
    </location>
</feature>
<feature type="glycosylation site" description="N-linked (GlcNAc...) asparagine" evidence="1">
    <location>
        <position position="248"/>
    </location>
</feature>
<feature type="glycosylation site" description="N-linked (GlcNAc...) asparagine" evidence="1">
    <location>
        <position position="292"/>
    </location>
</feature>
<feature type="glycosylation site" description="N-linked (GlcNAc...) asparagine" evidence="1">
    <location>
        <position position="312"/>
    </location>
</feature>
<feature type="glycosylation site" description="N-linked (GlcNAc...) asparagine" evidence="1">
    <location>
        <position position="368"/>
    </location>
</feature>
<feature type="glycosylation site" description="N-linked (GlcNAc...) asparagine" evidence="1">
    <location>
        <position position="428"/>
    </location>
</feature>
<feature type="glycosylation site" description="N-linked (GlcNAc...) asparagine" evidence="1">
    <location>
        <position position="487"/>
    </location>
</feature>
<feature type="glycosylation site" description="N-linked (GlcNAc...) asparagine" evidence="1">
    <location>
        <position position="527"/>
    </location>
</feature>
<feature type="sequence variant" id="VAR_027901" description="In dbSNP:rs9701796." evidence="2">
    <original>S</original>
    <variation>C</variation>
    <location>
        <position position="9"/>
    </location>
</feature>
<feature type="sequence variant" id="VAR_061199" description="In dbSNP:rs35874116." evidence="2">
    <original>I</original>
    <variation>V</variation>
    <location>
        <position position="191"/>
    </location>
</feature>
<feature type="sequence variant" id="VAR_061200" description="In dbSNP:rs34447754." evidence="2">
    <original>R</original>
    <variation>G</variation>
    <location>
        <position position="317"/>
    </location>
</feature>
<feature type="sequence variant" id="VAR_061201" description="In dbSNP:rs28374389." evidence="2">
    <original>I</original>
    <variation>V</variation>
    <location>
        <position position="486"/>
    </location>
</feature>
<feature type="sequence variant" id="VAR_020787" description="In dbSNP:rs6662276.">
    <original>A</original>
    <variation>T</variation>
    <location>
        <position position="574"/>
    </location>
</feature>
<feature type="sequence variant" id="VAR_061202" description="In dbSNP:rs41273167.">
    <original>I</original>
    <variation>T</variation>
    <location>
        <position position="595"/>
    </location>
</feature>
<feature type="sequence variant" id="VAR_027902" description="In dbSNP:rs9988418.">
    <original>R</original>
    <variation>K</variation>
    <location>
        <position position="838"/>
    </location>
</feature>
<sequence length="839" mass="95183">MGPRAKTISSLFFLLWVLAEPAENSDFYLPGDYLLGGLFSLHANMKGIVHLNFLQVPMCKEYEVKVIGYNLMQAMRFAVEEINNDSSLLPGVLLGYEIVDVCYISNNVQPVLYFLAHEDNLLPIQEDYSNYISRVVAVIGPDNSESVMTVANFLSLFLLPQITYSAISDELRDKVRFPALLRTTPSADHHIEAMVQLMLHFRWNWIIVLVSSDTYGRDNGQLLGERVARRDICIAFQETLPTLQPNQNMTSEERQRLVTIVDKLQQSTARVVVVFSPDLTLYHFFNEVLRQNFTGAVWIASESWAIDPVLHNLTELRHLGTFLGITIQSVPIPGFSEFREWGPQAGPPPLSRTSQSYTCNQECDNCLNATLSFNTILRLSGERVVYSVYSAVYAVAHALHSLLGCDKSTCTKRVVYPWQLLEEIWKVNFTLLDHQIFFDPQGDVALHLEIVQWQWDRSQNPFQSVASYYPLQRQLKNIQDISWHTINNTIPMSMCSKRCQSGQKKKPVGIHVCCFECIDCLPGTFLNHTEDEYECQACPNNEWSYQSETSCFKRQLVFLEWHEAPTIAVALLAALGFLSTLAILVIFWRHFQTPIVRSAGGPMCFLMLTLLLVAYMVVPVYVGPPKVSTCLCRQALFPLCFTICISCIAVRSFQIVCAFKMASRFPRAYSYWVRYQGPYVSMAFITVLKMVIVVIGMLATGLSPTTRTDPDDPKITIVSCNPNYRNSLLFNTSLDLLLSVVGFSFAYMGKELPTNYNEAKFITLSMTFYFTSSVSLCTFMSAYSGVLVTIVDLLVTVLNLLAISLGYFGPKCYMILFYPERNTPAYFNSMIQGYTMRRD</sequence>
<accession>Q8TE23</accession>
<accession>Q5TZ19</accession>
<comment type="function">
    <text>Putative taste receptor. TAS1R2/TAS1R3 recognizes diverse natural and synthetic sweeteners.</text>
</comment>
<comment type="subunit">
    <text>Forms heterodimers with TAS1R3.</text>
</comment>
<comment type="subcellular location">
    <subcellularLocation>
        <location>Cell membrane</location>
        <topology>Multi-pass membrane protein</topology>
    </subcellularLocation>
</comment>
<comment type="similarity">
    <text evidence="3">Belongs to the G-protein coupled receptor 3 family. TAS1R subfamily.</text>
</comment>
<comment type="online information" name="Protein Spotlight">
    <link uri="https://www.proteinspotlight.org/back_issues/055"/>
    <text>The taste experience - Issue 55 of February 2005</text>
</comment>
<evidence type="ECO:0000255" key="1"/>
<evidence type="ECO:0000269" key="2">
    <source>
    </source>
</evidence>
<evidence type="ECO:0000305" key="3"/>
<keyword id="KW-1003">Cell membrane</keyword>
<keyword id="KW-0297">G-protein coupled receptor</keyword>
<keyword id="KW-0325">Glycoprotein</keyword>
<keyword id="KW-0472">Membrane</keyword>
<keyword id="KW-1267">Proteomics identification</keyword>
<keyword id="KW-0675">Receptor</keyword>
<keyword id="KW-1185">Reference proteome</keyword>
<keyword id="KW-0716">Sensory transduction</keyword>
<keyword id="KW-0732">Signal</keyword>
<keyword id="KW-0919">Taste</keyword>
<keyword id="KW-0807">Transducer</keyword>
<keyword id="KW-0812">Transmembrane</keyword>
<keyword id="KW-1133">Transmembrane helix</keyword>